<feature type="chain" id="PRO_0000092066" description="Energy-coupling factor transporter ATP-binding protein EcfA1">
    <location>
        <begin position="1"/>
        <end position="269"/>
    </location>
</feature>
<feature type="domain" description="ABC transporter" evidence="1">
    <location>
        <begin position="8"/>
        <end position="242"/>
    </location>
</feature>
<feature type="binding site" evidence="1">
    <location>
        <begin position="42"/>
        <end position="49"/>
    </location>
    <ligand>
        <name>ATP</name>
        <dbReference type="ChEBI" id="CHEBI:30616"/>
    </ligand>
</feature>
<reference key="1">
    <citation type="journal article" date="2001" name="Lancet">
        <title>Whole genome sequencing of meticillin-resistant Staphylococcus aureus.</title>
        <authorList>
            <person name="Kuroda M."/>
            <person name="Ohta T."/>
            <person name="Uchiyama I."/>
            <person name="Baba T."/>
            <person name="Yuzawa H."/>
            <person name="Kobayashi I."/>
            <person name="Cui L."/>
            <person name="Oguchi A."/>
            <person name="Aoki K."/>
            <person name="Nagai Y."/>
            <person name="Lian J.-Q."/>
            <person name="Ito T."/>
            <person name="Kanamori M."/>
            <person name="Matsumaru H."/>
            <person name="Maruyama A."/>
            <person name="Murakami H."/>
            <person name="Hosoyama A."/>
            <person name="Mizutani-Ui Y."/>
            <person name="Takahashi N.K."/>
            <person name="Sawano T."/>
            <person name="Inoue R."/>
            <person name="Kaito C."/>
            <person name="Sekimizu K."/>
            <person name="Hirakawa H."/>
            <person name="Kuhara S."/>
            <person name="Goto S."/>
            <person name="Yabuzaki J."/>
            <person name="Kanehisa M."/>
            <person name="Yamashita A."/>
            <person name="Oshima K."/>
            <person name="Furuya K."/>
            <person name="Yoshino C."/>
            <person name="Shiba T."/>
            <person name="Hattori M."/>
            <person name="Ogasawara N."/>
            <person name="Hayashi H."/>
            <person name="Hiramatsu K."/>
        </authorList>
    </citation>
    <scope>NUCLEOTIDE SEQUENCE [LARGE SCALE GENOMIC DNA]</scope>
    <source>
        <strain>Mu50 / ATCC 700699</strain>
    </source>
</reference>
<accession>Q99S47</accession>
<protein>
    <recommendedName>
        <fullName evidence="1">Energy-coupling factor transporter ATP-binding protein EcfA1</fullName>
        <shortName evidence="1">ECF transporter A component EcfA1</shortName>
        <ecNumber evidence="1">7.-.-.-</ecNumber>
    </recommendedName>
</protein>
<comment type="function">
    <text evidence="1">ATP-binding (A) component of a common energy-coupling factor (ECF) ABC-transporter complex. Unlike classic ABC transporters this ECF transporter provides the energy necessary to transport a number of different substrates.</text>
</comment>
<comment type="subunit">
    <text evidence="1">Forms a stable energy-coupling factor (ECF) transporter complex composed of 2 membrane-embedded substrate-binding proteins (S component), 2 ATP-binding proteins (A component) and 2 transmembrane proteins (T component).</text>
</comment>
<comment type="subcellular location">
    <subcellularLocation>
        <location evidence="1">Cell membrane</location>
        <topology evidence="1">Peripheral membrane protein</topology>
    </subcellularLocation>
</comment>
<comment type="similarity">
    <text evidence="1">Belongs to the ABC transporter superfamily. Energy-coupling factor EcfA family.</text>
</comment>
<gene>
    <name evidence="1" type="primary">ecfA1</name>
    <name type="synonym">cbiO1</name>
    <name type="ordered locus">SAV2222</name>
</gene>
<name>ECFA1_STAAM</name>
<sequence length="269" mass="30047">MEDKNSVIVFKNVSFQYQSDASFTLKDVSFNIPKGQWTSIVGHNGSGKSTIAKLMIGIEKVKSGEIFYNNQAITDDNFEKLRKDIGIVFQNPDNQFVGSIVKYDVAFGLENHAVPHDEMHRRVSEALKQVDMLERADYEPNALSGGQKQRVAIASVLALNPSVIILDEATSMLDPDARQNLLDLVRKVKSEHNITIISITHDLSEAMEADHVIVMNKGTVYKEGTATEIFDHAEELTRIGLDLPFPIKINQMLGHQTSFLTYEGLVDQL</sequence>
<dbReference type="EC" id="7.-.-.-" evidence="1"/>
<dbReference type="EMBL" id="BA000017">
    <property type="protein sequence ID" value="BAB58384.1"/>
    <property type="molecule type" value="Genomic_DNA"/>
</dbReference>
<dbReference type="RefSeq" id="WP_000389658.1">
    <property type="nucleotide sequence ID" value="NC_002758.2"/>
</dbReference>
<dbReference type="SMR" id="Q99S47"/>
<dbReference type="KEGG" id="sav:SAV2222"/>
<dbReference type="HOGENOM" id="CLU_000604_1_22_9"/>
<dbReference type="PhylomeDB" id="Q99S47"/>
<dbReference type="Proteomes" id="UP000002481">
    <property type="component" value="Chromosome"/>
</dbReference>
<dbReference type="GO" id="GO:0043190">
    <property type="term" value="C:ATP-binding cassette (ABC) transporter complex"/>
    <property type="evidence" value="ECO:0007669"/>
    <property type="project" value="TreeGrafter"/>
</dbReference>
<dbReference type="GO" id="GO:0005524">
    <property type="term" value="F:ATP binding"/>
    <property type="evidence" value="ECO:0007669"/>
    <property type="project" value="UniProtKB-KW"/>
</dbReference>
<dbReference type="GO" id="GO:0016887">
    <property type="term" value="F:ATP hydrolysis activity"/>
    <property type="evidence" value="ECO:0007669"/>
    <property type="project" value="InterPro"/>
</dbReference>
<dbReference type="GO" id="GO:0042626">
    <property type="term" value="F:ATPase-coupled transmembrane transporter activity"/>
    <property type="evidence" value="ECO:0007669"/>
    <property type="project" value="TreeGrafter"/>
</dbReference>
<dbReference type="CDD" id="cd03225">
    <property type="entry name" value="ABC_cobalt_CbiO_domain1"/>
    <property type="match status" value="1"/>
</dbReference>
<dbReference type="FunFam" id="3.40.50.300:FF:000224">
    <property type="entry name" value="Energy-coupling factor transporter ATP-binding protein EcfA"/>
    <property type="match status" value="1"/>
</dbReference>
<dbReference type="Gene3D" id="3.40.50.300">
    <property type="entry name" value="P-loop containing nucleotide triphosphate hydrolases"/>
    <property type="match status" value="1"/>
</dbReference>
<dbReference type="InterPro" id="IPR003593">
    <property type="entry name" value="AAA+_ATPase"/>
</dbReference>
<dbReference type="InterPro" id="IPR003439">
    <property type="entry name" value="ABC_transporter-like_ATP-bd"/>
</dbReference>
<dbReference type="InterPro" id="IPR017871">
    <property type="entry name" value="ABC_transporter-like_CS"/>
</dbReference>
<dbReference type="InterPro" id="IPR015856">
    <property type="entry name" value="ABC_transpr_CbiO/EcfA_su"/>
</dbReference>
<dbReference type="InterPro" id="IPR050095">
    <property type="entry name" value="ECF_ABC_transporter_ATP-bd"/>
</dbReference>
<dbReference type="InterPro" id="IPR030947">
    <property type="entry name" value="EcfA_1"/>
</dbReference>
<dbReference type="InterPro" id="IPR027417">
    <property type="entry name" value="P-loop_NTPase"/>
</dbReference>
<dbReference type="NCBIfam" id="TIGR04520">
    <property type="entry name" value="ECF_ATPase_1"/>
    <property type="match status" value="1"/>
</dbReference>
<dbReference type="NCBIfam" id="NF010167">
    <property type="entry name" value="PRK13648.1"/>
    <property type="match status" value="1"/>
</dbReference>
<dbReference type="PANTHER" id="PTHR43553:SF24">
    <property type="entry name" value="ENERGY-COUPLING FACTOR TRANSPORTER ATP-BINDING PROTEIN ECFA1"/>
    <property type="match status" value="1"/>
</dbReference>
<dbReference type="PANTHER" id="PTHR43553">
    <property type="entry name" value="HEAVY METAL TRANSPORTER"/>
    <property type="match status" value="1"/>
</dbReference>
<dbReference type="Pfam" id="PF00005">
    <property type="entry name" value="ABC_tran"/>
    <property type="match status" value="1"/>
</dbReference>
<dbReference type="SMART" id="SM00382">
    <property type="entry name" value="AAA"/>
    <property type="match status" value="1"/>
</dbReference>
<dbReference type="SUPFAM" id="SSF52540">
    <property type="entry name" value="P-loop containing nucleoside triphosphate hydrolases"/>
    <property type="match status" value="1"/>
</dbReference>
<dbReference type="PROSITE" id="PS00211">
    <property type="entry name" value="ABC_TRANSPORTER_1"/>
    <property type="match status" value="1"/>
</dbReference>
<dbReference type="PROSITE" id="PS50893">
    <property type="entry name" value="ABC_TRANSPORTER_2"/>
    <property type="match status" value="1"/>
</dbReference>
<dbReference type="PROSITE" id="PS51246">
    <property type="entry name" value="CBIO"/>
    <property type="match status" value="1"/>
</dbReference>
<organism>
    <name type="scientific">Staphylococcus aureus (strain Mu50 / ATCC 700699)</name>
    <dbReference type="NCBI Taxonomy" id="158878"/>
    <lineage>
        <taxon>Bacteria</taxon>
        <taxon>Bacillati</taxon>
        <taxon>Bacillota</taxon>
        <taxon>Bacilli</taxon>
        <taxon>Bacillales</taxon>
        <taxon>Staphylococcaceae</taxon>
        <taxon>Staphylococcus</taxon>
    </lineage>
</organism>
<proteinExistence type="inferred from homology"/>
<keyword id="KW-0067">ATP-binding</keyword>
<keyword id="KW-1003">Cell membrane</keyword>
<keyword id="KW-0472">Membrane</keyword>
<keyword id="KW-0547">Nucleotide-binding</keyword>
<keyword id="KW-1278">Translocase</keyword>
<keyword id="KW-0813">Transport</keyword>
<evidence type="ECO:0000255" key="1">
    <source>
        <dbReference type="HAMAP-Rule" id="MF_01710"/>
    </source>
</evidence>